<protein>
    <recommendedName>
        <fullName>Tyrosine-protein phosphatase non-receptor type 22</fullName>
        <ecNumber evidence="21 25">3.1.3.48</ecNumber>
    </recommendedName>
    <alternativeName>
        <fullName>Hematopoietic cell protein-tyrosine phosphatase 70Z-PEP</fullName>
    </alternativeName>
    <alternativeName>
        <fullName>Lymphoid phosphatase</fullName>
        <shortName>LyP</shortName>
    </alternativeName>
    <alternativeName>
        <fullName>PEST-domain phosphatase</fullName>
        <shortName>PEP</shortName>
    </alternativeName>
</protein>
<keyword id="KW-0002">3D-structure</keyword>
<keyword id="KW-0025">Alternative splicing</keyword>
<keyword id="KW-0072">Autophagy</keyword>
<keyword id="KW-0963">Cytoplasm</keyword>
<keyword id="KW-0219">Diabetes mellitus</keyword>
<keyword id="KW-0225">Disease variant</keyword>
<keyword id="KW-1015">Disulfide bond</keyword>
<keyword id="KW-0378">Hydrolase</keyword>
<keyword id="KW-0391">Immunity</keyword>
<keyword id="KW-0443">Lipid metabolism</keyword>
<keyword id="KW-0597">Phosphoprotein</keyword>
<keyword id="KW-0904">Protein phosphatase</keyword>
<keyword id="KW-1267">Proteomics identification</keyword>
<keyword id="KW-1185">Reference proteome</keyword>
<keyword id="KW-0772">Systemic lupus erythematosus</keyword>
<organism>
    <name type="scientific">Homo sapiens</name>
    <name type="common">Human</name>
    <dbReference type="NCBI Taxonomy" id="9606"/>
    <lineage>
        <taxon>Eukaryota</taxon>
        <taxon>Metazoa</taxon>
        <taxon>Chordata</taxon>
        <taxon>Craniata</taxon>
        <taxon>Vertebrata</taxon>
        <taxon>Euteleostomi</taxon>
        <taxon>Mammalia</taxon>
        <taxon>Eutheria</taxon>
        <taxon>Euarchontoglires</taxon>
        <taxon>Primates</taxon>
        <taxon>Haplorrhini</taxon>
        <taxon>Catarrhini</taxon>
        <taxon>Hominidae</taxon>
        <taxon>Homo</taxon>
    </lineage>
</organism>
<name>PTN22_HUMAN</name>
<proteinExistence type="evidence at protein level"/>
<evidence type="ECO:0000250" key="1">
    <source>
        <dbReference type="UniProtKB" id="P29352"/>
    </source>
</evidence>
<evidence type="ECO:0000255" key="2">
    <source>
        <dbReference type="PROSITE-ProRule" id="PRU00160"/>
    </source>
</evidence>
<evidence type="ECO:0000255" key="3">
    <source>
        <dbReference type="PROSITE-ProRule" id="PRU10044"/>
    </source>
</evidence>
<evidence type="ECO:0000256" key="4">
    <source>
        <dbReference type="SAM" id="MobiDB-lite"/>
    </source>
</evidence>
<evidence type="ECO:0000269" key="5">
    <source>
    </source>
</evidence>
<evidence type="ECO:0000269" key="6">
    <source>
    </source>
</evidence>
<evidence type="ECO:0000269" key="7">
    <source>
    </source>
</evidence>
<evidence type="ECO:0000269" key="8">
    <source>
    </source>
</evidence>
<evidence type="ECO:0000269" key="9">
    <source>
    </source>
</evidence>
<evidence type="ECO:0000269" key="10">
    <source>
    </source>
</evidence>
<evidence type="ECO:0000269" key="11">
    <source>
    </source>
</evidence>
<evidence type="ECO:0000269" key="12">
    <source>
    </source>
</evidence>
<evidence type="ECO:0000269" key="13">
    <source>
    </source>
</evidence>
<evidence type="ECO:0000269" key="14">
    <source>
    </source>
</evidence>
<evidence type="ECO:0000269" key="15">
    <source>
    </source>
</evidence>
<evidence type="ECO:0000269" key="16">
    <source>
    </source>
</evidence>
<evidence type="ECO:0000269" key="17">
    <source>
    </source>
</evidence>
<evidence type="ECO:0000269" key="18">
    <source>
    </source>
</evidence>
<evidence type="ECO:0000269" key="19">
    <source>
    </source>
</evidence>
<evidence type="ECO:0000269" key="20">
    <source>
    </source>
</evidence>
<evidence type="ECO:0000269" key="21">
    <source>
    </source>
</evidence>
<evidence type="ECO:0000269" key="22">
    <source>
    </source>
</evidence>
<evidence type="ECO:0000269" key="23">
    <source>
    </source>
</evidence>
<evidence type="ECO:0000269" key="24">
    <source>
    </source>
</evidence>
<evidence type="ECO:0000269" key="25">
    <source>
    </source>
</evidence>
<evidence type="ECO:0000269" key="26">
    <source ref="20"/>
</evidence>
<evidence type="ECO:0000269" key="27">
    <source ref="3"/>
</evidence>
<evidence type="ECO:0000269" key="28">
    <source ref="7"/>
</evidence>
<evidence type="ECO:0000303" key="29">
    <source>
    </source>
</evidence>
<evidence type="ECO:0000303" key="30">
    <source>
    </source>
</evidence>
<evidence type="ECO:0000303" key="31">
    <source>
    </source>
</evidence>
<evidence type="ECO:0000303" key="32">
    <source>
    </source>
</evidence>
<evidence type="ECO:0000305" key="33"/>
<evidence type="ECO:0007744" key="34">
    <source>
    </source>
</evidence>
<evidence type="ECO:0007829" key="35">
    <source>
        <dbReference type="PDB" id="2P6X"/>
    </source>
</evidence>
<evidence type="ECO:0007829" key="36">
    <source>
        <dbReference type="PDB" id="2QCJ"/>
    </source>
</evidence>
<evidence type="ECO:0007829" key="37">
    <source>
        <dbReference type="PDB" id="3BRH"/>
    </source>
</evidence>
<evidence type="ECO:0007829" key="38">
    <source>
        <dbReference type="PDB" id="3OMH"/>
    </source>
</evidence>
<evidence type="ECO:0007829" key="39">
    <source>
        <dbReference type="PDB" id="4J51"/>
    </source>
</evidence>
<sequence length="807" mass="91705">MDQREILQKFLDEAQSKKITKEEFANEFLKLKRQSTKYKADKTYPTTVAEKPKNIKKNRYKDILPYDYSRVELSLITSDEDSSYINANFIKGVYGPKAYIATQGPLSTTLLDFWRMIWEYSVLIIVMACMEYEMGKKKCERYWAEPGEMQLEFGPFSVSCEAEKRKSDYIIRTLKVKFNSETRTIYQFHYKNWPDHDVPSSIDPILELIWDVRCYQEDDSVPICIHCSAGCGRTGVICAIDYTWMLLKDGIIPENFSVFSLIREMRTQRPSLVQTQEQYELVYNAVLELFKRQMDVIRDKHSGTESQAKHCIPEKNHTLQADSYSPNLPKSTTKAAKMMNQQRTKMEIKESSSFDFRTSEISAKEELVLHPAKSSTSFDFLELNYSFDKNADTTMKWQTKAFPIVGEPLQKHQSLDLGSLLFEGCSNSKPVNAAGRYFNSKVPITRTKSTPFELIQQRETKEVDSKENFSYLESQPHDSCFVEMQAQKVMHVSSAELNYSLPYDSKHQIRNASNVKHHDSSALGVYSYIPLVENPYFSSWPPSGTSSKMSLDLPEKQDGTVFPSSLLPTSSTSLFSYYNSHDSLSLNSPTNISSLLNQESAVLATAPRIDDEIPPPLPVRTPESFIVVEEAGEFSPNVPKSLSSAVKVKIGTSLEWGGTSEPKKFDDSVILRPSKSVKLRSPKSELHQDRSSPPPPLPERTLESFFLADEDCMQAQSIETYSTSYPDTMENSTSSKQTLKTPGKSFTRSKSLKILRNMKKSICNSCPPNKPAESVQSNNSSSFLNFGFANRFSKPKGPRNPPPTWNI</sequence>
<dbReference type="EC" id="3.1.3.48" evidence="21 25"/>
<dbReference type="EMBL" id="AF001846">
    <property type="protein sequence ID" value="AAD00904.1"/>
    <property type="molecule type" value="mRNA"/>
</dbReference>
<dbReference type="EMBL" id="AF001847">
    <property type="protein sequence ID" value="AAD00905.1"/>
    <property type="molecule type" value="mRNA"/>
</dbReference>
<dbReference type="EMBL" id="GU479452">
    <property type="protein sequence ID" value="ADD59979.1"/>
    <property type="molecule type" value="mRNA"/>
</dbReference>
<dbReference type="EMBL" id="AF077031">
    <property type="protein sequence ID" value="AAD27764.1"/>
    <property type="molecule type" value="mRNA"/>
</dbReference>
<dbReference type="EMBL" id="AK310570">
    <property type="status" value="NOT_ANNOTATED_CDS"/>
    <property type="molecule type" value="mRNA"/>
</dbReference>
<dbReference type="EMBL" id="EF064714">
    <property type="protein sequence ID" value="ABK41897.1"/>
    <property type="molecule type" value="Genomic_DNA"/>
</dbReference>
<dbReference type="EMBL" id="AL137856">
    <property type="status" value="NOT_ANNOTATED_CDS"/>
    <property type="molecule type" value="Genomic_DNA"/>
</dbReference>
<dbReference type="EMBL" id="CH471122">
    <property type="protein sequence ID" value="EAW56575.1"/>
    <property type="molecule type" value="Genomic_DNA"/>
</dbReference>
<dbReference type="EMBL" id="CH471122">
    <property type="protein sequence ID" value="EAW56576.1"/>
    <property type="molecule type" value="Genomic_DNA"/>
</dbReference>
<dbReference type="EMBL" id="BC017785">
    <property type="protein sequence ID" value="AAH17785.1"/>
    <property type="molecule type" value="mRNA"/>
</dbReference>
<dbReference type="EMBL" id="BC071670">
    <property type="protein sequence ID" value="AAH71670.1"/>
    <property type="molecule type" value="mRNA"/>
</dbReference>
<dbReference type="CCDS" id="CCDS863.1">
    <molecule id="Q9Y2R2-1"/>
</dbReference>
<dbReference type="CCDS" id="CCDS864.2">
    <molecule id="Q9Y2R2-3"/>
</dbReference>
<dbReference type="RefSeq" id="NP_001180360.1">
    <property type="nucleotide sequence ID" value="NM_001193431.2"/>
</dbReference>
<dbReference type="RefSeq" id="NP_001295226.1">
    <property type="nucleotide sequence ID" value="NM_001308297.1"/>
</dbReference>
<dbReference type="RefSeq" id="NP_036543.4">
    <property type="nucleotide sequence ID" value="NM_012411.5"/>
</dbReference>
<dbReference type="RefSeq" id="NP_057051.3">
    <property type="nucleotide sequence ID" value="NM_015967.6"/>
</dbReference>
<dbReference type="PDB" id="2P6X">
    <property type="method" value="X-ray"/>
    <property type="resolution" value="1.90 A"/>
    <property type="chains" value="A/B=1-302"/>
</dbReference>
<dbReference type="PDB" id="2QCJ">
    <property type="method" value="X-ray"/>
    <property type="resolution" value="3.00 A"/>
    <property type="chains" value="A/B=1-294"/>
</dbReference>
<dbReference type="PDB" id="2QCT">
    <property type="method" value="X-ray"/>
    <property type="resolution" value="2.80 A"/>
    <property type="chains" value="A/B=1-294"/>
</dbReference>
<dbReference type="PDB" id="3BRH">
    <property type="method" value="X-ray"/>
    <property type="resolution" value="2.20 A"/>
    <property type="chains" value="A/B=1-310"/>
</dbReference>
<dbReference type="PDB" id="3H2X">
    <property type="method" value="X-ray"/>
    <property type="resolution" value="2.20 A"/>
    <property type="chains" value="A=1-302"/>
</dbReference>
<dbReference type="PDB" id="3OLR">
    <property type="method" value="X-ray"/>
    <property type="resolution" value="2.50 A"/>
    <property type="chains" value="A/B/C/D=1-294"/>
</dbReference>
<dbReference type="PDB" id="3OMH">
    <property type="method" value="X-ray"/>
    <property type="resolution" value="2.90 A"/>
    <property type="chains" value="A/B/C/D=1-294"/>
</dbReference>
<dbReference type="PDB" id="4J51">
    <property type="method" value="X-ray"/>
    <property type="resolution" value="2.30 A"/>
    <property type="chains" value="A/B=1-303"/>
</dbReference>
<dbReference type="PDB" id="7AAM">
    <property type="method" value="X-ray"/>
    <property type="resolution" value="2.15 A"/>
    <property type="chains" value="C=787-807"/>
</dbReference>
<dbReference type="PDBsum" id="2P6X"/>
<dbReference type="PDBsum" id="2QCJ"/>
<dbReference type="PDBsum" id="2QCT"/>
<dbReference type="PDBsum" id="3BRH"/>
<dbReference type="PDBsum" id="3H2X"/>
<dbReference type="PDBsum" id="3OLR"/>
<dbReference type="PDBsum" id="3OMH"/>
<dbReference type="PDBsum" id="4J51"/>
<dbReference type="PDBsum" id="7AAM"/>
<dbReference type="SMR" id="Q9Y2R2"/>
<dbReference type="BioGRID" id="117604">
    <property type="interactions" value="54"/>
</dbReference>
<dbReference type="DIP" id="DIP-29953N"/>
<dbReference type="FunCoup" id="Q9Y2R2">
    <property type="interactions" value="1371"/>
</dbReference>
<dbReference type="IntAct" id="Q9Y2R2">
    <property type="interactions" value="42"/>
</dbReference>
<dbReference type="MINT" id="Q9Y2R2"/>
<dbReference type="STRING" id="9606.ENSP00000352833"/>
<dbReference type="BindingDB" id="Q9Y2R2"/>
<dbReference type="ChEMBL" id="CHEMBL2889"/>
<dbReference type="GuidetoPHARMACOLOGY" id="3084"/>
<dbReference type="DEPOD" id="PTPN22"/>
<dbReference type="iPTMnet" id="Q9Y2R2"/>
<dbReference type="PhosphoSitePlus" id="Q9Y2R2"/>
<dbReference type="BioMuta" id="PTPN22"/>
<dbReference type="DMDM" id="20139861"/>
<dbReference type="jPOST" id="Q9Y2R2"/>
<dbReference type="MassIVE" id="Q9Y2R2"/>
<dbReference type="PaxDb" id="9606-ENSP00000352833"/>
<dbReference type="PeptideAtlas" id="Q9Y2R2"/>
<dbReference type="ProteomicsDB" id="21761"/>
<dbReference type="ProteomicsDB" id="22726"/>
<dbReference type="ProteomicsDB" id="85874">
    <molecule id="Q9Y2R2-1"/>
</dbReference>
<dbReference type="ProteomicsDB" id="85875">
    <molecule id="Q9Y2R2-2"/>
</dbReference>
<dbReference type="ProteomicsDB" id="85876">
    <molecule id="Q9Y2R2-3"/>
</dbReference>
<dbReference type="ProteomicsDB" id="85877">
    <molecule id="Q9Y2R2-4"/>
</dbReference>
<dbReference type="ProteomicsDB" id="85878">
    <molecule id="Q9Y2R2-5"/>
</dbReference>
<dbReference type="Antibodypedia" id="33846">
    <property type="antibodies" value="306 antibodies from 35 providers"/>
</dbReference>
<dbReference type="DNASU" id="26191"/>
<dbReference type="Ensembl" id="ENST00000460620.5">
    <molecule id="Q9Y2R2-5"/>
    <property type="protein sequence ID" value="ENSP00000433141.1"/>
    <property type="gene ID" value="ENSG00000134242.16"/>
</dbReference>
<dbReference type="GeneID" id="26191"/>
<dbReference type="KEGG" id="hsa:26191"/>
<dbReference type="UCSC" id="uc001edt.4">
    <molecule id="Q9Y2R2-1"/>
    <property type="organism name" value="human"/>
</dbReference>
<dbReference type="AGR" id="HGNC:9652"/>
<dbReference type="CTD" id="26191"/>
<dbReference type="DisGeNET" id="26191"/>
<dbReference type="GeneCards" id="PTPN22"/>
<dbReference type="HGNC" id="HGNC:9652">
    <property type="gene designation" value="PTPN22"/>
</dbReference>
<dbReference type="HPA" id="ENSG00000134242">
    <property type="expression patterns" value="Tissue enhanced (bone marrow, lymphoid tissue)"/>
</dbReference>
<dbReference type="MalaCards" id="PTPN22"/>
<dbReference type="MIM" id="152700">
    <property type="type" value="phenotype"/>
</dbReference>
<dbReference type="MIM" id="180300">
    <property type="type" value="phenotype"/>
</dbReference>
<dbReference type="MIM" id="193200">
    <property type="type" value="phenotype"/>
</dbReference>
<dbReference type="MIM" id="222100">
    <property type="type" value="phenotype"/>
</dbReference>
<dbReference type="MIM" id="600716">
    <property type="type" value="gene"/>
</dbReference>
<dbReference type="neXtProt" id="NX_Q9Y2R2"/>
<dbReference type="OpenTargets" id="ENSG00000134242"/>
<dbReference type="Orphanet" id="397">
    <property type="disease" value="Giant cell arteritis"/>
</dbReference>
<dbReference type="Orphanet" id="900">
    <property type="disease" value="Granulomatosis with polyangiitis"/>
</dbReference>
<dbReference type="Orphanet" id="85410">
    <property type="disease" value="Oligoarticular juvenile idiopathic arthritis"/>
</dbReference>
<dbReference type="Orphanet" id="85408">
    <property type="disease" value="Rheumatoid factor-negative polyarticular juvenile idiopathic arthritis"/>
</dbReference>
<dbReference type="Orphanet" id="536">
    <property type="disease" value="Systemic lupus erythematosus"/>
</dbReference>
<dbReference type="Orphanet" id="3437">
    <property type="disease" value="Vogt-Koyanagi-Harada disease"/>
</dbReference>
<dbReference type="PharmGKB" id="PA33995"/>
<dbReference type="VEuPathDB" id="HostDB:ENSG00000134242"/>
<dbReference type="eggNOG" id="KOG0789">
    <property type="taxonomic scope" value="Eukaryota"/>
</dbReference>
<dbReference type="GeneTree" id="ENSGT00940000160958"/>
<dbReference type="InParanoid" id="Q9Y2R2"/>
<dbReference type="OrthoDB" id="10253954at2759"/>
<dbReference type="PAN-GO" id="Q9Y2R2">
    <property type="GO annotations" value="20 GO annotations based on evolutionary models"/>
</dbReference>
<dbReference type="PhylomeDB" id="Q9Y2R2"/>
<dbReference type="TreeFam" id="TF351977"/>
<dbReference type="BRENDA" id="3.1.3.48">
    <property type="organism ID" value="2681"/>
</dbReference>
<dbReference type="PathwayCommons" id="Q9Y2R2"/>
<dbReference type="Reactome" id="R-HSA-202427">
    <property type="pathway name" value="Phosphorylation of CD3 and TCR zeta chains"/>
</dbReference>
<dbReference type="Reactome" id="R-HSA-202430">
    <property type="pathway name" value="Translocation of ZAP-70 to Immunological synapse"/>
</dbReference>
<dbReference type="SignaLink" id="Q9Y2R2"/>
<dbReference type="SIGNOR" id="Q9Y2R2"/>
<dbReference type="BioGRID-ORCS" id="26191">
    <property type="hits" value="23 hits in 1184 CRISPR screens"/>
</dbReference>
<dbReference type="ChiTaRS" id="PTPN22">
    <property type="organism name" value="human"/>
</dbReference>
<dbReference type="EvolutionaryTrace" id="Q9Y2R2"/>
<dbReference type="GeneWiki" id="PTPN22"/>
<dbReference type="GenomeRNAi" id="26191"/>
<dbReference type="Pharos" id="Q9Y2R2">
    <property type="development level" value="Tchem"/>
</dbReference>
<dbReference type="PRO" id="PR:Q9Y2R2"/>
<dbReference type="Proteomes" id="UP000005640">
    <property type="component" value="Chromosome 1"/>
</dbReference>
<dbReference type="RNAct" id="Q9Y2R2">
    <property type="molecule type" value="protein"/>
</dbReference>
<dbReference type="Bgee" id="ENSG00000134242">
    <property type="expression patterns" value="Expressed in bone marrow cell and 118 other cell types or tissues"/>
</dbReference>
<dbReference type="ExpressionAtlas" id="Q9Y2R2">
    <property type="expression patterns" value="baseline and differential"/>
</dbReference>
<dbReference type="GO" id="GO:0005737">
    <property type="term" value="C:cytoplasm"/>
    <property type="evidence" value="ECO:0000314"/>
    <property type="project" value="UniProtKB"/>
</dbReference>
<dbReference type="GO" id="GO:0009898">
    <property type="term" value="C:cytoplasmic side of plasma membrane"/>
    <property type="evidence" value="ECO:0000314"/>
    <property type="project" value="UniProtKB"/>
</dbReference>
<dbReference type="GO" id="GO:0005829">
    <property type="term" value="C:cytosol"/>
    <property type="evidence" value="ECO:0000304"/>
    <property type="project" value="Reactome"/>
</dbReference>
<dbReference type="GO" id="GO:0005634">
    <property type="term" value="C:nucleus"/>
    <property type="evidence" value="ECO:0000314"/>
    <property type="project" value="UniProtKB"/>
</dbReference>
<dbReference type="GO" id="GO:0048471">
    <property type="term" value="C:perinuclear region of cytoplasm"/>
    <property type="evidence" value="ECO:0000314"/>
    <property type="project" value="BHF-UCL"/>
</dbReference>
<dbReference type="GO" id="GO:0019900">
    <property type="term" value="F:kinase binding"/>
    <property type="evidence" value="ECO:0000250"/>
    <property type="project" value="BHF-UCL"/>
</dbReference>
<dbReference type="GO" id="GO:0004726">
    <property type="term" value="F:non-membrane spanning protein tyrosine phosphatase activity"/>
    <property type="evidence" value="ECO:0007669"/>
    <property type="project" value="InterPro"/>
</dbReference>
<dbReference type="GO" id="GO:0016791">
    <property type="term" value="F:phosphatase activity"/>
    <property type="evidence" value="ECO:0000314"/>
    <property type="project" value="UniProtKB"/>
</dbReference>
<dbReference type="GO" id="GO:0004725">
    <property type="term" value="F:protein tyrosine phosphatase activity"/>
    <property type="evidence" value="ECO:0000314"/>
    <property type="project" value="UniProtKB"/>
</dbReference>
<dbReference type="GO" id="GO:0017124">
    <property type="term" value="F:SH3 domain binding"/>
    <property type="evidence" value="ECO:0000250"/>
    <property type="project" value="BHF-UCL"/>
</dbReference>
<dbReference type="GO" id="GO:0031625">
    <property type="term" value="F:ubiquitin protein ligase binding"/>
    <property type="evidence" value="ECO:0000353"/>
    <property type="project" value="UniProtKB"/>
</dbReference>
<dbReference type="GO" id="GO:0006914">
    <property type="term" value="P:autophagy"/>
    <property type="evidence" value="ECO:0007669"/>
    <property type="project" value="UniProtKB-KW"/>
</dbReference>
<dbReference type="GO" id="GO:0071225">
    <property type="term" value="P:cellular response to muramyl dipeptide"/>
    <property type="evidence" value="ECO:0000314"/>
    <property type="project" value="UniProtKB"/>
</dbReference>
<dbReference type="GO" id="GO:0006629">
    <property type="term" value="P:lipid metabolic process"/>
    <property type="evidence" value="ECO:0007669"/>
    <property type="project" value="UniProtKB-KW"/>
</dbReference>
<dbReference type="GO" id="GO:0031663">
    <property type="term" value="P:lipopolysaccharide-mediated signaling pathway"/>
    <property type="evidence" value="ECO:0000315"/>
    <property type="project" value="UniProtKB"/>
</dbReference>
<dbReference type="GO" id="GO:0010507">
    <property type="term" value="P:negative regulation of autophagy"/>
    <property type="evidence" value="ECO:0000315"/>
    <property type="project" value="UniProtKB"/>
</dbReference>
<dbReference type="GO" id="GO:0010629">
    <property type="term" value="P:negative regulation of gene expression"/>
    <property type="evidence" value="ECO:0000315"/>
    <property type="project" value="UniProtKB"/>
</dbReference>
<dbReference type="GO" id="GO:0032715">
    <property type="term" value="P:negative regulation of interleukin-6 production"/>
    <property type="evidence" value="ECO:0000315"/>
    <property type="project" value="UniProtKB"/>
</dbReference>
<dbReference type="GO" id="GO:0032717">
    <property type="term" value="P:negative regulation of interleukin-8 production"/>
    <property type="evidence" value="ECO:0000315"/>
    <property type="project" value="UniProtKB"/>
</dbReference>
<dbReference type="GO" id="GO:0043508">
    <property type="term" value="P:negative regulation of JUN kinase activity"/>
    <property type="evidence" value="ECO:0000315"/>
    <property type="project" value="UniProtKB"/>
</dbReference>
<dbReference type="GO" id="GO:0070433">
    <property type="term" value="P:negative regulation of nucleotide-binding oligomerization domain containing 2 signaling pathway"/>
    <property type="evidence" value="ECO:0000315"/>
    <property type="project" value="UniProtKB"/>
</dbReference>
<dbReference type="GO" id="GO:1903753">
    <property type="term" value="P:negative regulation of p38MAPK cascade"/>
    <property type="evidence" value="ECO:0000315"/>
    <property type="project" value="UniProtKB"/>
</dbReference>
<dbReference type="GO" id="GO:0050868">
    <property type="term" value="P:negative regulation of T cell activation"/>
    <property type="evidence" value="ECO:0000315"/>
    <property type="project" value="BHF-UCL"/>
</dbReference>
<dbReference type="GO" id="GO:0050860">
    <property type="term" value="P:negative regulation of T cell receptor signaling pathway"/>
    <property type="evidence" value="ECO:0000314"/>
    <property type="project" value="UniProtKB"/>
</dbReference>
<dbReference type="GO" id="GO:0032720">
    <property type="term" value="P:negative regulation of tumor necrosis factor production"/>
    <property type="evidence" value="ECO:0000315"/>
    <property type="project" value="UniProtKB"/>
</dbReference>
<dbReference type="GO" id="GO:0035644">
    <property type="term" value="P:phosphoanandamide dephosphorylation"/>
    <property type="evidence" value="ECO:0000250"/>
    <property type="project" value="BHF-UCL"/>
</dbReference>
<dbReference type="GO" id="GO:0070374">
    <property type="term" value="P:positive regulation of ERK1 and ERK2 cascade"/>
    <property type="evidence" value="ECO:0000315"/>
    <property type="project" value="UniProtKB"/>
</dbReference>
<dbReference type="GO" id="GO:0010628">
    <property type="term" value="P:positive regulation of gene expression"/>
    <property type="evidence" value="ECO:0000315"/>
    <property type="project" value="UniProtKB"/>
</dbReference>
<dbReference type="GO" id="GO:1900227">
    <property type="term" value="P:positive regulation of NLRP3 inflammasome complex assembly"/>
    <property type="evidence" value="ECO:0000314"/>
    <property type="project" value="UniProtKB"/>
</dbReference>
<dbReference type="GO" id="GO:1902523">
    <property type="term" value="P:positive regulation of protein K63-linked ubiquitination"/>
    <property type="evidence" value="ECO:0000315"/>
    <property type="project" value="UniProtKB"/>
</dbReference>
<dbReference type="GO" id="GO:0034141">
    <property type="term" value="P:positive regulation of toll-like receptor 3 signaling pathway"/>
    <property type="evidence" value="ECO:0000315"/>
    <property type="project" value="UniProtKB"/>
</dbReference>
<dbReference type="GO" id="GO:0034145">
    <property type="term" value="P:positive regulation of toll-like receptor 4 signaling pathway"/>
    <property type="evidence" value="ECO:0000315"/>
    <property type="project" value="UniProtKB"/>
</dbReference>
<dbReference type="GO" id="GO:0032481">
    <property type="term" value="P:positive regulation of type I interferon production"/>
    <property type="evidence" value="ECO:0000315"/>
    <property type="project" value="UniProtKB"/>
</dbReference>
<dbReference type="GO" id="GO:0032729">
    <property type="term" value="P:positive regulation of type II interferon production"/>
    <property type="evidence" value="ECO:0000315"/>
    <property type="project" value="UniProtKB"/>
</dbReference>
<dbReference type="GO" id="GO:0050855">
    <property type="term" value="P:regulation of B cell receptor signaling pathway"/>
    <property type="evidence" value="ECO:0000303"/>
    <property type="project" value="BHF-UCL"/>
</dbReference>
<dbReference type="GO" id="GO:0045088">
    <property type="term" value="P:regulation of innate immune response"/>
    <property type="evidence" value="ECO:0000318"/>
    <property type="project" value="GO_Central"/>
</dbReference>
<dbReference type="GO" id="GO:0032817">
    <property type="term" value="P:regulation of natural killer cell proliferation"/>
    <property type="evidence" value="ECO:0000314"/>
    <property type="project" value="BHF-UCL"/>
</dbReference>
<dbReference type="GO" id="GO:1901222">
    <property type="term" value="P:regulation of non-canonical NF-kappaB signal transduction"/>
    <property type="evidence" value="ECO:0000315"/>
    <property type="project" value="UniProtKB"/>
</dbReference>
<dbReference type="GO" id="GO:0032496">
    <property type="term" value="P:response to lipopolysaccharide"/>
    <property type="evidence" value="ECO:0000315"/>
    <property type="project" value="UniProtKB"/>
</dbReference>
<dbReference type="GO" id="GO:0030217">
    <property type="term" value="P:T cell differentiation"/>
    <property type="evidence" value="ECO:0000250"/>
    <property type="project" value="BHF-UCL"/>
</dbReference>
<dbReference type="GO" id="GO:0050852">
    <property type="term" value="P:T cell receptor signaling pathway"/>
    <property type="evidence" value="ECO:0000318"/>
    <property type="project" value="GO_Central"/>
</dbReference>
<dbReference type="CDD" id="cd14602">
    <property type="entry name" value="PTPc-N22"/>
    <property type="match status" value="1"/>
</dbReference>
<dbReference type="FunFam" id="3.90.190.10:FF:000045">
    <property type="entry name" value="Tyrosine-protein phosphatase non-receptor type 12"/>
    <property type="match status" value="1"/>
</dbReference>
<dbReference type="Gene3D" id="3.90.190.10">
    <property type="entry name" value="Protein tyrosine phosphatase superfamily"/>
    <property type="match status" value="1"/>
</dbReference>
<dbReference type="InterPro" id="IPR029021">
    <property type="entry name" value="Prot-tyrosine_phosphatase-like"/>
</dbReference>
<dbReference type="InterPro" id="IPR047170">
    <property type="entry name" value="PTN12/18/22"/>
</dbReference>
<dbReference type="InterPro" id="IPR047253">
    <property type="entry name" value="PTN22_cat"/>
</dbReference>
<dbReference type="InterPro" id="IPR000242">
    <property type="entry name" value="PTP_cat"/>
</dbReference>
<dbReference type="InterPro" id="IPR016276">
    <property type="entry name" value="PTPN22"/>
</dbReference>
<dbReference type="InterPro" id="IPR016130">
    <property type="entry name" value="Tyr_Pase_AS"/>
</dbReference>
<dbReference type="InterPro" id="IPR003595">
    <property type="entry name" value="Tyr_Pase_cat"/>
</dbReference>
<dbReference type="InterPro" id="IPR000387">
    <property type="entry name" value="Tyr_Pase_dom"/>
</dbReference>
<dbReference type="PANTHER" id="PTHR45983">
    <property type="entry name" value="TYROSINE PHOSPHATSE N18, PUTATIVE-RELATED"/>
    <property type="match status" value="1"/>
</dbReference>
<dbReference type="PANTHER" id="PTHR45983:SF1">
    <property type="entry name" value="TYROSINE-PROTEIN PHOSPHATASE NON-RECEPTOR TYPE 22"/>
    <property type="match status" value="1"/>
</dbReference>
<dbReference type="Pfam" id="PF00102">
    <property type="entry name" value="Y_phosphatase"/>
    <property type="match status" value="1"/>
</dbReference>
<dbReference type="PIRSF" id="PIRSF000930">
    <property type="entry name" value="PTPN8_PTPN22"/>
    <property type="match status" value="1"/>
</dbReference>
<dbReference type="PRINTS" id="PR00700">
    <property type="entry name" value="PRTYPHPHTASE"/>
</dbReference>
<dbReference type="SMART" id="SM00194">
    <property type="entry name" value="PTPc"/>
    <property type="match status" value="1"/>
</dbReference>
<dbReference type="SMART" id="SM00404">
    <property type="entry name" value="PTPc_motif"/>
    <property type="match status" value="1"/>
</dbReference>
<dbReference type="SUPFAM" id="SSF52799">
    <property type="entry name" value="(Phosphotyrosine protein) phosphatases II"/>
    <property type="match status" value="1"/>
</dbReference>
<dbReference type="PROSITE" id="PS00383">
    <property type="entry name" value="TYR_PHOSPHATASE_1"/>
    <property type="match status" value="1"/>
</dbReference>
<dbReference type="PROSITE" id="PS50056">
    <property type="entry name" value="TYR_PHOSPHATASE_2"/>
    <property type="match status" value="1"/>
</dbReference>
<dbReference type="PROSITE" id="PS50055">
    <property type="entry name" value="TYR_PHOSPHATASE_PTP"/>
    <property type="match status" value="1"/>
</dbReference>
<gene>
    <name type="primary">PTPN22</name>
    <name type="synonym">PTPN8</name>
</gene>
<accession>Q9Y2R2</accession>
<accession>A0N0K6</accession>
<accession>B1ALC8</accession>
<accession>D4NZ71</accession>
<accession>E9PLD8</accession>
<accession>E9PPI1</accession>
<accession>O95063</accession>
<accession>O95064</accession>
<accession>Q6IPX8</accession>
<accession>Q8WVM1</accession>
<feature type="chain" id="PRO_0000094775" description="Tyrosine-protein phosphatase non-receptor type 22">
    <location>
        <begin position="1"/>
        <end position="807"/>
    </location>
</feature>
<feature type="domain" description="Tyrosine-protein phosphatase" evidence="2">
    <location>
        <begin position="24"/>
        <end position="289"/>
    </location>
</feature>
<feature type="region of interest" description="Disordered" evidence="4">
    <location>
        <begin position="676"/>
        <end position="700"/>
    </location>
</feature>
<feature type="region of interest" description="Disordered" evidence="4">
    <location>
        <begin position="724"/>
        <end position="746"/>
    </location>
</feature>
<feature type="active site" description="Phosphocysteine intermediate" evidence="2 3">
    <location>
        <position position="227"/>
    </location>
</feature>
<feature type="binding site" evidence="26">
    <location>
        <begin position="227"/>
        <end position="233"/>
    </location>
    <ligand>
        <name>substrate</name>
    </ligand>
</feature>
<feature type="binding site" evidence="26">
    <location>
        <position position="274"/>
    </location>
    <ligand>
        <name>substrate</name>
    </ligand>
</feature>
<feature type="modified residue" description="Phosphoserine; by PKC/PRKCD" evidence="14">
    <location>
        <position position="35"/>
    </location>
</feature>
<feature type="modified residue" description="Phosphoserine" evidence="34">
    <location>
        <position position="449"/>
    </location>
</feature>
<feature type="modified residue" description="Phosphoserine" evidence="1">
    <location>
        <position position="635"/>
    </location>
</feature>
<feature type="modified residue" description="Phosphoserine" evidence="1">
    <location>
        <position position="684"/>
    </location>
</feature>
<feature type="modified residue" description="Phosphoserine" evidence="1">
    <location>
        <position position="692"/>
    </location>
</feature>
<feature type="disulfide bond" evidence="18">
    <location>
        <begin position="129"/>
        <end position="227"/>
    </location>
</feature>
<feature type="splice variant" id="VSP_044428" description="In isoform 6." evidence="30">
    <location>
        <begin position="124"/>
        <end position="250"/>
    </location>
</feature>
<feature type="splice variant" id="VSP_039725" description="In isoform 5." evidence="31">
    <location>
        <begin position="137"/>
        <end position="160"/>
    </location>
</feature>
<feature type="splice variant" id="VSP_039726" description="In isoform 5." evidence="31">
    <original>ETRTIYQFHYKNWPDHDVPSSID</original>
    <variation>VSVILAHQTSLQNLFSQITPAHF</variation>
    <location>
        <begin position="181"/>
        <end position="203"/>
    </location>
</feature>
<feature type="splice variant" id="VSP_039727" description="In isoform 5." evidence="31">
    <location>
        <begin position="204"/>
        <end position="807"/>
    </location>
</feature>
<feature type="splice variant" id="VSP_039728" description="In isoform 3." evidence="31">
    <location>
        <begin position="251"/>
        <end position="305"/>
    </location>
</feature>
<feature type="splice variant" id="VSP_039729" description="In isoform 4." evidence="32">
    <location>
        <begin position="647"/>
        <end position="674"/>
    </location>
</feature>
<feature type="splice variant" id="VSP_005134" description="In isoform 2." evidence="29">
    <original>ELHQDRSSPPPPLPERTLESFFLADEDCMQAQSIETYSTSYPDTMENSTSSKQTLKTPGKSFTRSKSLKILRNMKKSICNSCPPNKPAESVQSNNSSSFLNFGFANRFSKPKGPRNPPPTWNI</original>
    <variation>GKNFSWL</variation>
    <location>
        <begin position="685"/>
        <end position="807"/>
    </location>
</feature>
<feature type="splice variant" id="VSP_044429" description="In isoform 6." evidence="30">
    <original>FANRFSKPKGPRNPPPTWNI</original>
    <variation>MCVILLKS</variation>
    <location>
        <begin position="788"/>
        <end position="807"/>
    </location>
</feature>
<feature type="sequence variant" id="VAR_072629" description="Moderately reduces phosphatase activity; dbSNP:rs7416347." evidence="22">
    <original>S</original>
    <variation>F</variation>
    <location>
        <position position="201"/>
    </location>
</feature>
<feature type="sequence variant" id="VAR_072630" description="Probable protective factor against SLE; severely reduces phosphatase activity; dbSNP:rs33996649." evidence="15 20 22">
    <original>R</original>
    <variation>Q</variation>
    <location>
        <position position="263"/>
    </location>
</feature>
<feature type="sequence variant" id="VAR_072631" description="Severely reduces phosphatase activity; dbSNP:rs72650670." evidence="22">
    <original>R</original>
    <variation>W</variation>
    <location>
        <position position="266"/>
    </location>
</feature>
<feature type="sequence variant" id="VAR_022605" description="Risk factor for T1D; risk factor for RA; risk factor for SLE; risk factor for VTLG; probable protective factor against Crohn disease; also found in patients with Graves disease, Hashimoto thyroiditis and Addison disease; affects CSK kinase binding; alters B cell receptor signaling and memory B cell proliferation; dbSNP:rs2476601." evidence="6 7 8 9 10 11 13 17 19 20 27 28">
    <original>R</original>
    <variation>W</variation>
    <location>
        <position position="620"/>
    </location>
</feature>
<feature type="mutagenesis site" description="Loss of phosphorylation by PKC/PRKCD." evidence="14">
    <original>S</original>
    <variation>E</variation>
    <location>
        <position position="35"/>
    </location>
</feature>
<feature type="mutagenesis site" description="No effect on phosphorylation by PKC/PRKCD." evidence="14">
    <original>T</original>
    <variation>E</variation>
    <location>
        <position position="36"/>
    </location>
</feature>
<feature type="mutagenesis site" description="Decreases activity 2 fold." evidence="18">
    <original>C</original>
    <variation>S</variation>
    <location>
        <position position="129"/>
    </location>
</feature>
<feature type="mutagenesis site" description="Decreases activity 7 fold." evidence="18">
    <original>C</original>
    <variation>S</variation>
    <location>
        <position position="231"/>
    </location>
</feature>
<feature type="sequence conflict" description="In Ref. 1; AAD00904/AAD00905." evidence="33" ref="1">
    <original>KP</original>
    <variation>NA</variation>
    <location>
        <begin position="51"/>
        <end position="52"/>
    </location>
</feature>
<feature type="sequence conflict" description="In Ref. 2; AAD27764." evidence="33" ref="2">
    <original>V</original>
    <variation>G</variation>
    <location>
        <position position="126"/>
    </location>
</feature>
<feature type="sequence conflict" description="In Ref. 2; AAD27764." evidence="33" ref="2">
    <original>G</original>
    <variation>V</variation>
    <location>
        <position position="147"/>
    </location>
</feature>
<feature type="sequence conflict" description="In Ref. 1; AAD00905." evidence="33" ref="1">
    <original>I</original>
    <variation>IV</variation>
    <location>
        <position position="240"/>
    </location>
</feature>
<feature type="sequence conflict" description="In Ref. 4; AK310570." evidence="33" ref="4">
    <original>A</original>
    <variation>V</variation>
    <location>
        <position position="372"/>
    </location>
</feature>
<feature type="sequence conflict" description="In Ref. 2; AAD27764." evidence="33" ref="2">
    <original>L</original>
    <variation>P</variation>
    <location>
        <position position="420"/>
    </location>
</feature>
<feature type="sequence conflict" description="In Ref. 2; AAD27764." evidence="33" ref="2">
    <original>P</original>
    <variation>S</variation>
    <location>
        <position position="742"/>
    </location>
</feature>
<feature type="helix" evidence="35">
    <location>
        <begin position="3"/>
        <end position="16"/>
    </location>
</feature>
<feature type="helix" evidence="35">
    <location>
        <begin position="21"/>
        <end position="40"/>
    </location>
</feature>
<feature type="helix" evidence="35">
    <location>
        <begin position="47"/>
        <end position="50"/>
    </location>
</feature>
<feature type="helix" evidence="35">
    <location>
        <begin position="52"/>
        <end position="55"/>
    </location>
</feature>
<feature type="strand" evidence="38">
    <location>
        <begin position="59"/>
        <end position="62"/>
    </location>
</feature>
<feature type="helix" evidence="35">
    <location>
        <begin position="67"/>
        <end position="69"/>
    </location>
</feature>
<feature type="strand" evidence="39">
    <location>
        <begin position="70"/>
        <end position="72"/>
    </location>
</feature>
<feature type="turn" evidence="39">
    <location>
        <begin position="80"/>
        <end position="83"/>
    </location>
</feature>
<feature type="strand" evidence="35">
    <location>
        <begin position="86"/>
        <end position="92"/>
    </location>
</feature>
<feature type="strand" evidence="35">
    <location>
        <begin position="95"/>
        <end position="102"/>
    </location>
</feature>
<feature type="helix" evidence="35">
    <location>
        <begin position="107"/>
        <end position="109"/>
    </location>
</feature>
<feature type="helix" evidence="35">
    <location>
        <begin position="110"/>
        <end position="119"/>
    </location>
</feature>
<feature type="strand" evidence="35">
    <location>
        <begin position="124"/>
        <end position="127"/>
    </location>
</feature>
<feature type="strand" evidence="35">
    <location>
        <begin position="131"/>
        <end position="133"/>
    </location>
</feature>
<feature type="strand" evidence="37">
    <location>
        <begin position="135"/>
        <end position="137"/>
    </location>
</feature>
<feature type="strand" evidence="36">
    <location>
        <begin position="146"/>
        <end position="148"/>
    </location>
</feature>
<feature type="strand" evidence="35">
    <location>
        <begin position="151"/>
        <end position="153"/>
    </location>
</feature>
<feature type="strand" evidence="35">
    <location>
        <begin position="156"/>
        <end position="165"/>
    </location>
</feature>
<feature type="strand" evidence="35">
    <location>
        <begin position="167"/>
        <end position="178"/>
    </location>
</feature>
<feature type="strand" evidence="35">
    <location>
        <begin position="181"/>
        <end position="190"/>
    </location>
</feature>
<feature type="strand" evidence="36">
    <location>
        <begin position="195"/>
        <end position="197"/>
    </location>
</feature>
<feature type="helix" evidence="35">
    <location>
        <begin position="199"/>
        <end position="202"/>
    </location>
</feature>
<feature type="helix" evidence="35">
    <location>
        <begin position="203"/>
        <end position="215"/>
    </location>
</feature>
<feature type="strand" evidence="37">
    <location>
        <begin position="218"/>
        <end position="221"/>
    </location>
</feature>
<feature type="strand" evidence="35">
    <location>
        <begin position="223"/>
        <end position="226"/>
    </location>
</feature>
<feature type="strand" evidence="35">
    <location>
        <begin position="228"/>
        <end position="232"/>
    </location>
</feature>
<feature type="helix" evidence="35">
    <location>
        <begin position="233"/>
        <end position="248"/>
    </location>
</feature>
<feature type="helix" evidence="35">
    <location>
        <begin position="258"/>
        <end position="266"/>
    </location>
</feature>
<feature type="helix" evidence="35">
    <location>
        <begin position="276"/>
        <end position="301"/>
    </location>
</feature>
<comment type="function">
    <text evidence="1 12 14 16 21 23 24 25">Acts as a negative regulator of T-cell receptor (TCR) signaling by direct dephosphorylation of the Src family kinases LCK and FYN, ITAMs of the TCRz/CD3 complex, as well as ZAP70, VAV, VCP and other key signaling molecules (PubMed:16461343, PubMed:18056643). Associates with and probably dephosphorylates CBL. Dephosphorylates LCK at its activating 'Tyr-394' residue (PubMed:21719704). Dephosphorylates ZAP70 at its activating 'Tyr-493' residue (PubMed:16461343). Dephosphorylates the immune system activator SKAP2 (PubMed:21719704). Positively regulates toll-like receptor (TLR)-induced type 1 interferon production (PubMed:23871208). Promotes host antiviral responses mediated by type 1 interferon (By similarity). Regulates NOD2-induced pro-inflammatory cytokine secretion and autophagy (PubMed:23991106). Acts as an activator of NLRP3 inflammasome assembly by mediating dephosphorylation of 'Tyr-861' of NLRP3 (PubMed:27043286). Dephosphorylates phospho-anandamide (p-AEA), an endocannabinoid to anandamide (also called N-arachidonoylethanolamide) (By similarity).</text>
</comment>
<comment type="catalytic activity">
    <reaction evidence="3 21 25">
        <text>O-phospho-L-tyrosyl-[protein] + H2O = L-tyrosyl-[protein] + phosphate</text>
        <dbReference type="Rhea" id="RHEA:10684"/>
        <dbReference type="Rhea" id="RHEA-COMP:10136"/>
        <dbReference type="Rhea" id="RHEA-COMP:20101"/>
        <dbReference type="ChEBI" id="CHEBI:15377"/>
        <dbReference type="ChEBI" id="CHEBI:43474"/>
        <dbReference type="ChEBI" id="CHEBI:46858"/>
        <dbReference type="ChEBI" id="CHEBI:61978"/>
        <dbReference type="EC" id="3.1.3.48"/>
    </reaction>
</comment>
<comment type="catalytic activity">
    <reaction evidence="1">
        <text>N-(5Z,8Z,11Z,14Z-eicosatetraenoyl)-ethanolamine phosphate + H2O = N-(5Z,8Z,11Z,14Z-eicosatetraenoyl)-ethanolamine + phosphate</text>
        <dbReference type="Rhea" id="RHEA:56532"/>
        <dbReference type="ChEBI" id="CHEBI:2700"/>
        <dbReference type="ChEBI" id="CHEBI:15377"/>
        <dbReference type="ChEBI" id="CHEBI:43474"/>
        <dbReference type="ChEBI" id="CHEBI:131894"/>
    </reaction>
    <physiologicalReaction direction="left-to-right" evidence="1">
        <dbReference type="Rhea" id="RHEA:56533"/>
    </physiologicalReaction>
</comment>
<comment type="activity regulation">
    <text>Down-regulated by phosphorylation.</text>
</comment>
<comment type="subunit">
    <text evidence="1 5 7 14 21 23 26">Interacts with CSK (PubMed:15208781). Interacts with LPXN (By similarity). Interacts with CBL (PubMed:10068674). Interacts with TRAF3 (via MATH domain); the interaction promotes TRAF3 polyubiquitination (PubMed:23871208).</text>
</comment>
<comment type="interaction">
    <interactant intactId="EBI-1211241">
        <id>Q9Y2R2</id>
    </interactant>
    <interactant intactId="EBI-1165705">
        <id>P20963</id>
        <label>CD247</label>
    </interactant>
    <organismsDiffer>false</organismsDiffer>
    <experiments>4</experiments>
</comment>
<comment type="interaction">
    <interactant intactId="EBI-1211241">
        <id>Q9Y2R2</id>
    </interactant>
    <interactant intactId="EBI-297353">
        <id>P00533</id>
        <label>EGFR</label>
    </interactant>
    <organismsDiffer>false</organismsDiffer>
    <experiments>3</experiments>
</comment>
<comment type="interaction">
    <interactant intactId="EBI-1211241">
        <id>Q9Y2R2</id>
    </interactant>
    <interactant intactId="EBI-401755">
        <id>P62993</id>
        <label>GRB2</label>
    </interactant>
    <organismsDiffer>false</organismsDiffer>
    <experiments>2</experiments>
</comment>
<comment type="interaction">
    <interactant intactId="EBI-1211241">
        <id>Q9Y2R2</id>
    </interactant>
    <interactant intactId="EBI-1348">
        <id>P06239</id>
        <label>LCK</label>
    </interactant>
    <organismsDiffer>false</organismsDiffer>
    <experiments>6</experiments>
</comment>
<comment type="interaction">
    <interactant intactId="EBI-1211241">
        <id>Q9Y2R2</id>
    </interactant>
    <interactant intactId="EBI-1050964">
        <id>O43586</id>
        <label>PSTPIP1</label>
    </interactant>
    <organismsDiffer>false</organismsDiffer>
    <experiments>6</experiments>
</comment>
<comment type="interaction">
    <interactant intactId="EBI-1211241">
        <id>Q9Y2R2</id>
    </interactant>
    <interactant intactId="EBI-2483161">
        <id>O75563</id>
        <label>SKAP2</label>
    </interactant>
    <organismsDiffer>false</organismsDiffer>
    <experiments>3</experiments>
</comment>
<comment type="interaction">
    <interactant intactId="EBI-1211241">
        <id>Q9Y2R2</id>
    </interactant>
    <interactant intactId="EBI-357631">
        <id>Q13114</id>
        <label>TRAF3</label>
    </interactant>
    <organismsDiffer>false</organismsDiffer>
    <experiments>2</experiments>
</comment>
<comment type="interaction">
    <interactant intactId="EBI-1211241">
        <id>Q9Y2R2</id>
    </interactant>
    <interactant intactId="EBI-1211276">
        <id>P43403</id>
        <label>ZAP70</label>
    </interactant>
    <organismsDiffer>false</organismsDiffer>
    <experiments>4</experiments>
</comment>
<comment type="interaction">
    <interactant intactId="EBI-1211241">
        <id>Q9Y2R2</id>
    </interactant>
    <interactant intactId="EBI-642769">
        <id>Q3UND0</id>
        <label>Skap2</label>
    </interactant>
    <organismsDiffer>true</organismsDiffer>
    <experiments>2</experiments>
</comment>
<comment type="interaction">
    <interactant intactId="EBI-1211241">
        <id>Q9Y2R2</id>
    </interactant>
    <interactant intactId="EBI-520135">
        <id>Q60803</id>
        <label>Traf3</label>
    </interactant>
    <organismsDiffer>true</organismsDiffer>
    <experiments>5</experiments>
</comment>
<comment type="interaction">
    <interactant intactId="EBI-6955492">
        <id>Q9Y2R2-1</id>
    </interactant>
    <interactant intactId="EBI-1050964">
        <id>O43586</id>
        <label>PSTPIP1</label>
    </interactant>
    <organismsDiffer>false</organismsDiffer>
    <experiments>9</experiments>
</comment>
<comment type="subcellular location">
    <subcellularLocation>
        <location evidence="1">Cytoplasm</location>
    </subcellularLocation>
</comment>
<comment type="alternative products">
    <event type="alternative splicing"/>
    <isoform>
        <id>Q9Y2R2-1</id>
        <name>1</name>
        <name>LyP1</name>
        <sequence type="displayed"/>
    </isoform>
    <isoform>
        <id>Q9Y2R2-2</id>
        <name>2</name>
        <name>LyP2</name>
        <sequence type="described" ref="VSP_005134"/>
    </isoform>
    <isoform>
        <id>Q9Y2R2-3</id>
        <name>3</name>
        <sequence type="described" ref="VSP_039728"/>
    </isoform>
    <isoform>
        <id>Q9Y2R2-4</id>
        <name>4</name>
        <name>LYP3</name>
        <sequence type="described" ref="VSP_039729"/>
    </isoform>
    <isoform>
        <id>Q9Y2R2-5</id>
        <name>5</name>
        <sequence type="described" ref="VSP_039725 VSP_039726 VSP_039727"/>
    </isoform>
    <isoform>
        <id>Q9Y2R2-6</id>
        <name>6</name>
        <name>PTPN22.6</name>
        <sequence type="described" ref="VSP_044428 VSP_044429"/>
    </isoform>
</comment>
<comment type="tissue specificity">
    <text evidence="7">Expressed in bone marrow, B and T-cells, PBMCs, natural killer cells, monocytes, dendritic cells and neutrophils (PubMed:15208781). Both isoform 1 and 4 are predominantly expressed in lymphoid tissues and cells. Isoform 1 is expressed in thymocytes and both mature B and T-cells.</text>
</comment>
<comment type="induction">
    <text evidence="24">By muramyl-dipeptide and lipopolysaccharide.</text>
</comment>
<comment type="PTM">
    <text evidence="14">Phosphorylation on Ser-35 by PKC/PRKCD abrogates its ability to dephosphorylate and inactivate the SRC family kinases.</text>
</comment>
<comment type="disease" evidence="8">
    <disease id="DI-02648">
        <name>Systemic lupus erythematosus</name>
        <acronym>SLE</acronym>
        <description>A chronic, relapsing, inflammatory, and often febrile multisystemic disorder of connective tissue, characterized principally by involvement of the skin, joints, kidneys and serosal membranes. It is of unknown etiology, but is thought to represent a failure of the regulatory mechanisms of the autoimmune system. The disease is marked by a wide range of system dysfunctions, an elevated erythrocyte sedimentation rate, and the formation of LE cells in the blood or bone marrow.</description>
        <dbReference type="MIM" id="152700"/>
    </disease>
    <text>Disease susceptibility is associated with variants affecting the gene represented in this entry.</text>
</comment>
<comment type="disease" evidence="6">
    <disease id="DI-01826">
        <name>Type 1 diabetes mellitus</name>
        <acronym>T1D</acronym>
        <description>A multifactorial disorder of glucose homeostasis that is characterized by susceptibility to ketoacidosis in the absence of insulin therapy. Clinical features are polydipsia, polyphagia and polyuria which result from hyperglycemia-induced osmotic diuresis and secondary thirst. These derangements result in long-term complications that affect the eyes, kidneys, nerves, and blood vessels.</description>
        <dbReference type="MIM" id="222100"/>
    </disease>
    <text>Disease susceptibility may be associated with variants affecting the gene represented in this entry.</text>
</comment>
<comment type="disease" evidence="7">
    <disease id="DI-02692">
        <name>Rheumatoid arthritis</name>
        <acronym>RA</acronym>
        <description>An inflammatory disease with autoimmune features and a complex genetic component. It primarily affects the joints and is characterized by inflammatory changes in the synovial membranes and articular structures, widespread fibrinoid degeneration of the collagen fibers in mesenchymal tissues, and by atrophy and rarefaction of bony structures.</description>
        <dbReference type="MIM" id="180300"/>
    </disease>
    <text>Disease susceptibility is associated with variants affecting the gene represented in this entry.</text>
</comment>
<comment type="disease" evidence="11">
    <disease id="DI-02735">
        <name>Vitiligo</name>
        <acronym>VTLG</acronym>
        <description>A pigmentary disorder of the skin and mucous membranes. It is characterized by circumscribed depigmented macules and patches, commonly on extensor aspects of extremities, on the face or neck and in skin folds. Vitiligo is a progressive disorder in which some or all of the melanocytes in the affected skin are selectively destroyed. It is a multifactorial disorder with a complex etiology probably including autoimmune mechanisms, and is associated with an elevated risk of other autoimmune diseases.</description>
        <dbReference type="MIM" id="193200"/>
    </disease>
    <text>Disease susceptibility is associated with variants affecting the gene represented in this entry.</text>
</comment>
<comment type="miscellaneous">
    <molecule>Isoform 2</molecule>
    <text evidence="33">Due to intron retention.</text>
</comment>
<comment type="miscellaneous">
    <molecule>Isoform 6</molecule>
    <text evidence="33">Lacks most of the phosphatase domain and functions as a dominant negative isoform of the full length PTPN22.</text>
</comment>
<comment type="similarity">
    <text evidence="33">Belongs to the protein-tyrosine phosphatase family. Non-receptor class 4 subfamily.</text>
</comment>
<reference key="1">
    <citation type="journal article" date="1999" name="Blood">
        <title>Cloning and characterization of a lymphoid-specific, inducible human protein tyrosine phosphatase, Lyp.</title>
        <authorList>
            <person name="Cohen S."/>
            <person name="Dadi H."/>
            <person name="Shaoul E."/>
            <person name="Sharfe N."/>
            <person name="Roifman C.M."/>
        </authorList>
    </citation>
    <scope>NUCLEOTIDE SEQUENCE [MRNA] (ISOFORMS 1 AND 2)</scope>
    <scope>INTERACTION WITH CBL</scope>
</reference>
<reference key="2">
    <citation type="journal article" date="2010" name="BMC Mol. Biol.">
        <title>Identification of a variant form of tyrosine phosphatase LYP.</title>
        <authorList>
            <person name="Wang S."/>
            <person name="Dong H."/>
            <person name="Han J."/>
            <person name="Ho W.T."/>
            <person name="Fu X."/>
            <person name="Zhao Z.J."/>
        </authorList>
    </citation>
    <scope>NUCLEOTIDE SEQUENCE [MRNA] (ISOFORM 4)</scope>
    <scope>VARIANT TRP-620</scope>
</reference>
<reference key="3">
    <citation type="submission" date="1998-07" db="EMBL/GenBank/DDBJ databases">
        <title>Human protein tyrosine phosphatase (70zpep) homolog.</title>
        <authorList>
            <person name="Liu T."/>
            <person name="Zhang J."/>
            <person name="Fu G."/>
            <person name="Zhang Q."/>
            <person name="Ye M."/>
            <person name="Zhou J."/>
            <person name="Wu J."/>
            <person name="Shen Y."/>
            <person name="Yu M."/>
            <person name="Chen S."/>
            <person name="Mao M."/>
            <person name="Chen Z."/>
        </authorList>
    </citation>
    <scope>NUCLEOTIDE SEQUENCE [MRNA] (ISOFORM 1)</scope>
    <scope>VARIANT TRP-620</scope>
</reference>
<reference key="4">
    <citation type="journal article" date="2004" name="Nat. Genet.">
        <title>Complete sequencing and characterization of 21,243 full-length human cDNAs.</title>
        <authorList>
            <person name="Ota T."/>
            <person name="Suzuki Y."/>
            <person name="Nishikawa T."/>
            <person name="Otsuki T."/>
            <person name="Sugiyama T."/>
            <person name="Irie R."/>
            <person name="Wakamatsu A."/>
            <person name="Hayashi K."/>
            <person name="Sato H."/>
            <person name="Nagai K."/>
            <person name="Kimura K."/>
            <person name="Makita H."/>
            <person name="Sekine M."/>
            <person name="Obayashi M."/>
            <person name="Nishi T."/>
            <person name="Shibahara T."/>
            <person name="Tanaka T."/>
            <person name="Ishii S."/>
            <person name="Yamamoto J."/>
            <person name="Saito K."/>
            <person name="Kawai Y."/>
            <person name="Isono Y."/>
            <person name="Nakamura Y."/>
            <person name="Nagahari K."/>
            <person name="Murakami K."/>
            <person name="Yasuda T."/>
            <person name="Iwayanagi T."/>
            <person name="Wagatsuma M."/>
            <person name="Shiratori A."/>
            <person name="Sudo H."/>
            <person name="Hosoiri T."/>
            <person name="Kaku Y."/>
            <person name="Kodaira H."/>
            <person name="Kondo H."/>
            <person name="Sugawara M."/>
            <person name="Takahashi M."/>
            <person name="Kanda K."/>
            <person name="Yokoi T."/>
            <person name="Furuya T."/>
            <person name="Kikkawa E."/>
            <person name="Omura Y."/>
            <person name="Abe K."/>
            <person name="Kamihara K."/>
            <person name="Katsuta N."/>
            <person name="Sato K."/>
            <person name="Tanikawa M."/>
            <person name="Yamazaki M."/>
            <person name="Ninomiya K."/>
            <person name="Ishibashi T."/>
            <person name="Yamashita H."/>
            <person name="Murakawa K."/>
            <person name="Fujimori K."/>
            <person name="Tanai H."/>
            <person name="Kimata M."/>
            <person name="Watanabe M."/>
            <person name="Hiraoka S."/>
            <person name="Chiba Y."/>
            <person name="Ishida S."/>
            <person name="Ono Y."/>
            <person name="Takiguchi S."/>
            <person name="Watanabe S."/>
            <person name="Yosida M."/>
            <person name="Hotuta T."/>
            <person name="Kusano J."/>
            <person name="Kanehori K."/>
            <person name="Takahashi-Fujii A."/>
            <person name="Hara H."/>
            <person name="Tanase T.-O."/>
            <person name="Nomura Y."/>
            <person name="Togiya S."/>
            <person name="Komai F."/>
            <person name="Hara R."/>
            <person name="Takeuchi K."/>
            <person name="Arita M."/>
            <person name="Imose N."/>
            <person name="Musashino K."/>
            <person name="Yuuki H."/>
            <person name="Oshima A."/>
            <person name="Sasaki N."/>
            <person name="Aotsuka S."/>
            <person name="Yoshikawa Y."/>
            <person name="Matsunawa H."/>
            <person name="Ichihara T."/>
            <person name="Shiohata N."/>
            <person name="Sano S."/>
            <person name="Moriya S."/>
            <person name="Momiyama H."/>
            <person name="Satoh N."/>
            <person name="Takami S."/>
            <person name="Terashima Y."/>
            <person name="Suzuki O."/>
            <person name="Nakagawa S."/>
            <person name="Senoh A."/>
            <person name="Mizoguchi H."/>
            <person name="Goto Y."/>
            <person name="Shimizu F."/>
            <person name="Wakebe H."/>
            <person name="Hishigaki H."/>
            <person name="Watanabe T."/>
            <person name="Sugiyama A."/>
            <person name="Takemoto M."/>
            <person name="Kawakami B."/>
            <person name="Yamazaki M."/>
            <person name="Watanabe K."/>
            <person name="Kumagai A."/>
            <person name="Itakura S."/>
            <person name="Fukuzumi Y."/>
            <person name="Fujimori Y."/>
            <person name="Komiyama M."/>
            <person name="Tashiro H."/>
            <person name="Tanigami A."/>
            <person name="Fujiwara T."/>
            <person name="Ono T."/>
            <person name="Yamada K."/>
            <person name="Fujii Y."/>
            <person name="Ozaki K."/>
            <person name="Hirao M."/>
            <person name="Ohmori Y."/>
            <person name="Kawabata A."/>
            <person name="Hikiji T."/>
            <person name="Kobatake N."/>
            <person name="Inagaki H."/>
            <person name="Ikema Y."/>
            <person name="Okamoto S."/>
            <person name="Okitani R."/>
            <person name="Kawakami T."/>
            <person name="Noguchi S."/>
            <person name="Itoh T."/>
            <person name="Shigeta K."/>
            <person name="Senba T."/>
            <person name="Matsumura K."/>
            <person name="Nakajima Y."/>
            <person name="Mizuno T."/>
            <person name="Morinaga M."/>
            <person name="Sasaki M."/>
            <person name="Togashi T."/>
            <person name="Oyama M."/>
            <person name="Hata H."/>
            <person name="Watanabe M."/>
            <person name="Komatsu T."/>
            <person name="Mizushima-Sugano J."/>
            <person name="Satoh T."/>
            <person name="Shirai Y."/>
            <person name="Takahashi Y."/>
            <person name="Nakagawa K."/>
            <person name="Okumura K."/>
            <person name="Nagase T."/>
            <person name="Nomura N."/>
            <person name="Kikuchi H."/>
            <person name="Masuho Y."/>
            <person name="Yamashita R."/>
            <person name="Nakai K."/>
            <person name="Yada T."/>
            <person name="Nakamura Y."/>
            <person name="Ohara O."/>
            <person name="Isogai T."/>
            <person name="Sugano S."/>
        </authorList>
    </citation>
    <scope>NUCLEOTIDE SEQUENCE [LARGE SCALE MRNA] (ISOFORM 6)</scope>
</reference>
<reference key="5">
    <citation type="submission" date="2006-10" db="EMBL/GenBank/DDBJ databases">
        <authorList>
            <person name="Livingston R.J."/>
            <person name="Shaffer T."/>
            <person name="McFarland I."/>
            <person name="Nguyen C.P."/>
            <person name="Stanaway I.B."/>
            <person name="Rajkumar N."/>
            <person name="Johnson E.J."/>
            <person name="da Ponte S.H."/>
            <person name="Willa H."/>
            <person name="Ahearn M.O."/>
            <person name="Bertucci C."/>
            <person name="Acklestad J."/>
            <person name="Carroll A."/>
            <person name="Swanson J."/>
            <person name="Gildersleeve H.I."/>
            <person name="Nickerson D.A."/>
        </authorList>
    </citation>
    <scope>NUCLEOTIDE SEQUENCE [GENOMIC DNA]</scope>
</reference>
<reference key="6">
    <citation type="journal article" date="2006" name="Nature">
        <title>The DNA sequence and biological annotation of human chromosome 1.</title>
        <authorList>
            <person name="Gregory S.G."/>
            <person name="Barlow K.F."/>
            <person name="McLay K.E."/>
            <person name="Kaul R."/>
            <person name="Swarbreck D."/>
            <person name="Dunham A."/>
            <person name="Scott C.E."/>
            <person name="Howe K.L."/>
            <person name="Woodfine K."/>
            <person name="Spencer C.C.A."/>
            <person name="Jones M.C."/>
            <person name="Gillson C."/>
            <person name="Searle S."/>
            <person name="Zhou Y."/>
            <person name="Kokocinski F."/>
            <person name="McDonald L."/>
            <person name="Evans R."/>
            <person name="Phillips K."/>
            <person name="Atkinson A."/>
            <person name="Cooper R."/>
            <person name="Jones C."/>
            <person name="Hall R.E."/>
            <person name="Andrews T.D."/>
            <person name="Lloyd C."/>
            <person name="Ainscough R."/>
            <person name="Almeida J.P."/>
            <person name="Ambrose K.D."/>
            <person name="Anderson F."/>
            <person name="Andrew R.W."/>
            <person name="Ashwell R.I.S."/>
            <person name="Aubin K."/>
            <person name="Babbage A.K."/>
            <person name="Bagguley C.L."/>
            <person name="Bailey J."/>
            <person name="Beasley H."/>
            <person name="Bethel G."/>
            <person name="Bird C.P."/>
            <person name="Bray-Allen S."/>
            <person name="Brown J.Y."/>
            <person name="Brown A.J."/>
            <person name="Buckley D."/>
            <person name="Burton J."/>
            <person name="Bye J."/>
            <person name="Carder C."/>
            <person name="Chapman J.C."/>
            <person name="Clark S.Y."/>
            <person name="Clarke G."/>
            <person name="Clee C."/>
            <person name="Cobley V."/>
            <person name="Collier R.E."/>
            <person name="Corby N."/>
            <person name="Coville G.J."/>
            <person name="Davies J."/>
            <person name="Deadman R."/>
            <person name="Dunn M."/>
            <person name="Earthrowl M."/>
            <person name="Ellington A.G."/>
            <person name="Errington H."/>
            <person name="Frankish A."/>
            <person name="Frankland J."/>
            <person name="French L."/>
            <person name="Garner P."/>
            <person name="Garnett J."/>
            <person name="Gay L."/>
            <person name="Ghori M.R.J."/>
            <person name="Gibson R."/>
            <person name="Gilby L.M."/>
            <person name="Gillett W."/>
            <person name="Glithero R.J."/>
            <person name="Grafham D.V."/>
            <person name="Griffiths C."/>
            <person name="Griffiths-Jones S."/>
            <person name="Grocock R."/>
            <person name="Hammond S."/>
            <person name="Harrison E.S.I."/>
            <person name="Hart E."/>
            <person name="Haugen E."/>
            <person name="Heath P.D."/>
            <person name="Holmes S."/>
            <person name="Holt K."/>
            <person name="Howden P.J."/>
            <person name="Hunt A.R."/>
            <person name="Hunt S.E."/>
            <person name="Hunter G."/>
            <person name="Isherwood J."/>
            <person name="James R."/>
            <person name="Johnson C."/>
            <person name="Johnson D."/>
            <person name="Joy A."/>
            <person name="Kay M."/>
            <person name="Kershaw J.K."/>
            <person name="Kibukawa M."/>
            <person name="Kimberley A.M."/>
            <person name="King A."/>
            <person name="Knights A.J."/>
            <person name="Lad H."/>
            <person name="Laird G."/>
            <person name="Lawlor S."/>
            <person name="Leongamornlert D.A."/>
            <person name="Lloyd D.M."/>
            <person name="Loveland J."/>
            <person name="Lovell J."/>
            <person name="Lush M.J."/>
            <person name="Lyne R."/>
            <person name="Martin S."/>
            <person name="Mashreghi-Mohammadi M."/>
            <person name="Matthews L."/>
            <person name="Matthews N.S.W."/>
            <person name="McLaren S."/>
            <person name="Milne S."/>
            <person name="Mistry S."/>
            <person name="Moore M.J.F."/>
            <person name="Nickerson T."/>
            <person name="O'Dell C.N."/>
            <person name="Oliver K."/>
            <person name="Palmeiri A."/>
            <person name="Palmer S.A."/>
            <person name="Parker A."/>
            <person name="Patel D."/>
            <person name="Pearce A.V."/>
            <person name="Peck A.I."/>
            <person name="Pelan S."/>
            <person name="Phelps K."/>
            <person name="Phillimore B.J."/>
            <person name="Plumb R."/>
            <person name="Rajan J."/>
            <person name="Raymond C."/>
            <person name="Rouse G."/>
            <person name="Saenphimmachak C."/>
            <person name="Sehra H.K."/>
            <person name="Sheridan E."/>
            <person name="Shownkeen R."/>
            <person name="Sims S."/>
            <person name="Skuce C.D."/>
            <person name="Smith M."/>
            <person name="Steward C."/>
            <person name="Subramanian S."/>
            <person name="Sycamore N."/>
            <person name="Tracey A."/>
            <person name="Tromans A."/>
            <person name="Van Helmond Z."/>
            <person name="Wall M."/>
            <person name="Wallis J.M."/>
            <person name="White S."/>
            <person name="Whitehead S.L."/>
            <person name="Wilkinson J.E."/>
            <person name="Willey D.L."/>
            <person name="Williams H."/>
            <person name="Wilming L."/>
            <person name="Wray P.W."/>
            <person name="Wu Z."/>
            <person name="Coulson A."/>
            <person name="Vaudin M."/>
            <person name="Sulston J.E."/>
            <person name="Durbin R.M."/>
            <person name="Hubbard T."/>
            <person name="Wooster R."/>
            <person name="Dunham I."/>
            <person name="Carter N.P."/>
            <person name="McVean G."/>
            <person name="Ross M.T."/>
            <person name="Harrow J."/>
            <person name="Olson M.V."/>
            <person name="Beck S."/>
            <person name="Rogers J."/>
            <person name="Bentley D.R."/>
        </authorList>
    </citation>
    <scope>NUCLEOTIDE SEQUENCE [LARGE SCALE GENOMIC DNA]</scope>
    <scope>VARIANT TRP-620</scope>
</reference>
<reference key="7">
    <citation type="submission" date="2005-07" db="EMBL/GenBank/DDBJ databases">
        <authorList>
            <person name="Mural R.J."/>
            <person name="Istrail S."/>
            <person name="Sutton G.G."/>
            <person name="Florea L."/>
            <person name="Halpern A.L."/>
            <person name="Mobarry C.M."/>
            <person name="Lippert R."/>
            <person name="Walenz B."/>
            <person name="Shatkay H."/>
            <person name="Dew I."/>
            <person name="Miller J.R."/>
            <person name="Flanigan M.J."/>
            <person name="Edwards N.J."/>
            <person name="Bolanos R."/>
            <person name="Fasulo D."/>
            <person name="Halldorsson B.V."/>
            <person name="Hannenhalli S."/>
            <person name="Turner R."/>
            <person name="Yooseph S."/>
            <person name="Lu F."/>
            <person name="Nusskern D.R."/>
            <person name="Shue B.C."/>
            <person name="Zheng X.H."/>
            <person name="Zhong F."/>
            <person name="Delcher A.L."/>
            <person name="Huson D.H."/>
            <person name="Kravitz S.A."/>
            <person name="Mouchard L."/>
            <person name="Reinert K."/>
            <person name="Remington K.A."/>
            <person name="Clark A.G."/>
            <person name="Waterman M.S."/>
            <person name="Eichler E.E."/>
            <person name="Adams M.D."/>
            <person name="Hunkapiller M.W."/>
            <person name="Myers E.W."/>
            <person name="Venter J.C."/>
        </authorList>
    </citation>
    <scope>NUCLEOTIDE SEQUENCE [LARGE SCALE GENOMIC DNA]</scope>
    <scope>VARIANT TRP-620</scope>
</reference>
<reference key="8">
    <citation type="journal article" date="2004" name="Genome Res.">
        <title>The status, quality, and expansion of the NIH full-length cDNA project: the Mammalian Gene Collection (MGC).</title>
        <authorList>
            <consortium name="The MGC Project Team"/>
        </authorList>
    </citation>
    <scope>NUCLEOTIDE SEQUENCE [LARGE SCALE MRNA] (ISOFORMS 3 AND 5)</scope>
    <source>
        <tissue>Lymph</tissue>
    </source>
</reference>
<reference key="9">
    <citation type="journal article" date="2006" name="J. Biol. Chem.">
        <title>Identification of substrates of human protein-tyrosine phosphatase PTPN22.</title>
        <authorList>
            <person name="Wu J."/>
            <person name="Katrekar A."/>
            <person name="Honigberg L.A."/>
            <person name="Smith A.M."/>
            <person name="Conn M.T."/>
            <person name="Tang J."/>
            <person name="Jeffery D."/>
            <person name="Mortara K."/>
            <person name="Sampang J."/>
            <person name="Williams S.R."/>
            <person name="Buggy J."/>
            <person name="Clark J.M."/>
        </authorList>
    </citation>
    <scope>FUNCTION</scope>
</reference>
<reference key="10">
    <citation type="journal article" date="2007" name="Autoimmunity">
        <title>Protein tyrosine phosphatase PTPN22 in human autoimmunity.</title>
        <authorList>
            <person name="Vang T."/>
            <person name="Miletic A.V."/>
            <person name="Bottini N."/>
            <person name="Mustelin T."/>
        </authorList>
    </citation>
    <scope>REVIEW ON FUNCTION</scope>
</reference>
<reference key="11">
    <citation type="journal article" date="2012" name="PLoS ONE">
        <title>PTPN22.6, a dominant negative isoform of PTPN22 and potential biomarker of rheumatoid arthritis.</title>
        <authorList>
            <person name="Chang H.H."/>
            <person name="Tai T.S."/>
            <person name="Lu B."/>
            <person name="Iannaccone C."/>
            <person name="Cernadas M."/>
            <person name="Weinblatt M."/>
            <person name="Shadick N."/>
            <person name="Miaw S.C."/>
            <person name="Ho I.C."/>
        </authorList>
    </citation>
    <scope>ALTERNATIVE SPLICING (ISOFORM 6)</scope>
</reference>
<reference key="12">
    <citation type="journal article" date="2013" name="Immunity">
        <title>The autoimmunity-associated gene PTPN22 potentiates toll-like receptor-driven, type 1 interferon-dependent immunity.</title>
        <authorList>
            <person name="Wang Y."/>
            <person name="Shaked I."/>
            <person name="Stanford S.M."/>
            <person name="Zhou W."/>
            <person name="Curtsinger J.M."/>
            <person name="Mikulski Z."/>
            <person name="Shaheen Z.R."/>
            <person name="Cheng G."/>
            <person name="Sawatzke K."/>
            <person name="Campbell A.M."/>
            <person name="Auger J.L."/>
            <person name="Bilgic H."/>
            <person name="Shoyama F.M."/>
            <person name="Schmeling D.O."/>
            <person name="Balfour H.H. Jr."/>
            <person name="Hasegawa K."/>
            <person name="Chan A.C."/>
            <person name="Corbett J.A."/>
            <person name="Binstadt B.A."/>
            <person name="Mescher M.F."/>
            <person name="Ley K."/>
            <person name="Bottini N."/>
            <person name="Peterson E.J."/>
        </authorList>
    </citation>
    <scope>FUNCTION</scope>
    <scope>INTERACTION WITH TRAF3</scope>
</reference>
<reference key="13">
    <citation type="journal article" date="2013" name="J. Proteome Res.">
        <title>Toward a comprehensive characterization of a human cancer cell phosphoproteome.</title>
        <authorList>
            <person name="Zhou H."/>
            <person name="Di Palma S."/>
            <person name="Preisinger C."/>
            <person name="Peng M."/>
            <person name="Polat A.N."/>
            <person name="Heck A.J."/>
            <person name="Mohammed S."/>
        </authorList>
    </citation>
    <scope>PHOSPHORYLATION [LARGE SCALE ANALYSIS] AT SER-449</scope>
    <scope>IDENTIFICATION BY MASS SPECTROMETRY [LARGE SCALE ANALYSIS]</scope>
    <source>
        <tissue>Erythroleukemia</tissue>
    </source>
</reference>
<reference key="14">
    <citation type="journal article" date="2013" name="PLoS ONE">
        <title>Protein tyrosine phosphatase non-receptor type 22 modulates NOD2-induced cytokine release and autophagy.</title>
        <authorList>
            <person name="Spalinger M.R."/>
            <person name="Lang S."/>
            <person name="Vavricka S.R."/>
            <person name="Fried M."/>
            <person name="Rogler G."/>
            <person name="Scharl M."/>
        </authorList>
    </citation>
    <scope>FUNCTION</scope>
</reference>
<reference key="15">
    <citation type="journal article" date="2016" name="J. Clin. Invest.">
        <title>NLRP3 tyrosine phosphorylation is controlled by protein tyrosine phosphatase PTPN22.</title>
        <authorList>
            <person name="Spalinger M.R."/>
            <person name="Kasper S."/>
            <person name="Gottier C."/>
            <person name="Lang S."/>
            <person name="Atrott K."/>
            <person name="Vavricka S.R."/>
            <person name="Scharl S."/>
            <person name="Raselli T."/>
            <person name="Frey-Wagner I."/>
            <person name="Gutte P.M."/>
            <person name="Gruetter M.G."/>
            <person name="Beer H.D."/>
            <person name="Contassot E."/>
            <person name="Chan A.C."/>
            <person name="Dai X."/>
            <person name="Rawlings D.J."/>
            <person name="Mair F."/>
            <person name="Becher B."/>
            <person name="Falk W."/>
            <person name="Fried M."/>
            <person name="Rogler G."/>
            <person name="Scharl M."/>
        </authorList>
    </citation>
    <scope>FUNCTION</scope>
    <scope>CATALYTIC ACTIVITY</scope>
</reference>
<reference key="16">
    <citation type="journal article" date="2007" name="Proc. Natl. Acad. Sci. U.S.A.">
        <title>Structure, inhibitor, and regulatory mechanism of Lyp, a lymphoid-specific tyrosine phosphatase implicated in autoimmune diseases.</title>
        <authorList>
            <person name="Yu X."/>
            <person name="Sun J.P."/>
            <person name="He Y."/>
            <person name="Guo X."/>
            <person name="Liu S."/>
            <person name="Zhou B."/>
            <person name="Hudmon A."/>
            <person name="Zhang Z.Y."/>
        </authorList>
    </citation>
    <scope>X-RAY CRYSTALLOGRAPHY (2.8 ANGSTROMS) OF 1-294 IN COMPLEX WITH INHIBITOR</scope>
    <scope>FUNCTION</scope>
    <scope>PHOSPHORYLATION AT SER-35</scope>
    <scope>MUTAGENESIS OF SER-35 AND THR-36</scope>
</reference>
<reference key="17">
    <citation type="journal article" date="2009" name="Biochemistry">
        <title>Crystal structure of the human lymphoid tyrosine phosphatase catalytic domain: insights into redox regulation.</title>
        <authorList>
            <person name="Tsai S.J."/>
            <person name="Sen U."/>
            <person name="Zhao L."/>
            <person name="Greenleaf W.B."/>
            <person name="Dasgupta J."/>
            <person name="Fiorillo E."/>
            <person name="Orru V."/>
            <person name="Bottini N."/>
            <person name="Chen X.S."/>
        </authorList>
    </citation>
    <scope>X-RAY CRYSTALLOGRAPHY (2.2 ANGSTROMS) OF 1-302</scope>
    <scope>DISULFIDE BOND</scope>
    <scope>MUTAGENESIS OF CYS-129 AND CYS-231</scope>
</reference>
<reference key="18">
    <citation type="journal article" date="2009" name="Cell">
        <title>Large-scale structural analysis of the classical human protein tyrosine phosphatome.</title>
        <authorList>
            <person name="Barr A.J."/>
            <person name="Ugochukwu E."/>
            <person name="Lee W.H."/>
            <person name="King O.N.F."/>
            <person name="Filippakopoulos P."/>
            <person name="Alfano I."/>
            <person name="Savitsky P."/>
            <person name="Burgess-Brown N.A."/>
            <person name="Mueller S."/>
            <person name="Knapp S."/>
        </authorList>
    </citation>
    <scope>X-RAY CRYSTALLOGRAPHY (1.9 ANGSTROMS) OF 1-302</scope>
    <scope>FUNCTION</scope>
</reference>
<reference key="19">
    <citation type="journal article" date="2009" name="Hum. Mol. Genet.">
        <title>A loss-of-function variant of PTPN22 is associated with reduced risk of systemic lupus erythematosus.</title>
        <authorList>
            <person name="Orru V."/>
            <person name="Tsai S.J."/>
            <person name="Rueda B."/>
            <person name="Fiorillo E."/>
            <person name="Stanford S.M."/>
            <person name="Dasgupta J."/>
            <person name="Hartiala J."/>
            <person name="Zhao L."/>
            <person name="Ortego-Centeno N."/>
            <person name="D'Alfonso S."/>
            <person name="Arnett F.C."/>
            <person name="Wu H."/>
            <person name="Gonzalez-Gay M.A."/>
            <person name="Tsao B.P."/>
            <person name="Pons-Estel B."/>
            <person name="Alarcon-Riquelme M.E."/>
            <person name="He Y."/>
            <person name="Zhang Z.Y."/>
            <person name="Allayee H."/>
            <person name="Chen X.S."/>
            <person name="Martin J."/>
            <person name="Bottini N."/>
            <person name="Danieli M.G."/>
            <person name="Galeazzi M."/>
            <person name="Sabbadini M.G."/>
            <person name="Migliaresi S."/>
            <person name="Sebastiani G.D."/>
        </authorList>
    </citation>
    <scope>X-RAY CRYSTALLOGRAPHY (2.65 ANGSTROMS) OF 2-309 OF WILD TYPE AND VARIANT GLN-263</scope>
    <scope>VARIANT GLN-263</scope>
    <scope>CATALYTIC ACTIVITY</scope>
    <scope>CHARACTERIZATION OF VARIANT GLN-263</scope>
</reference>
<reference key="20">
    <citation type="submission" date="2009-12" db="PDB data bank">
        <title>Lyp/PTPN22 phosphatase domain: substrate recognition and specificity for Src family kinases.</title>
        <authorList>
            <person name="Seidel R.D."/>
            <person name="Love J."/>
            <person name="Piserchio A."/>
            <person name="Cowburn D."/>
        </authorList>
    </citation>
    <scope>X-RAY CRYSTALLOGRAPHY (2.2 ANGSTROMS) OF 1-310 IN COMPLEX WITH SUBSTRATE</scope>
</reference>
<reference key="21">
    <citation type="journal article" date="2011" name="J. Biol. Chem.">
        <title>Substrate specificity of lymphoid-specific tyrosine phosphatase (Lyp) and identification of Src kinase-associated protein of 55 kDa homolog (SKAP-HOM) as a Lyp substrate.</title>
        <authorList>
            <person name="Yu X."/>
            <person name="Chen M."/>
            <person name="Zhang S."/>
            <person name="Yu Z.H."/>
            <person name="Sun J.P."/>
            <person name="Wang L."/>
            <person name="Liu S."/>
            <person name="Imasaki T."/>
            <person name="Takagi Y."/>
            <person name="Zhang Z.Y."/>
        </authorList>
    </citation>
    <scope>X-RAY CRYSTALLOGRAPHY (2.5 ANGSTROMS) OF 1-294 OF MUTANT SER-227 ALONE AND IN COMPLEX WITH SKAP2 PEPTIDE</scope>
    <scope>SUBSTRATE SPECIFICITY</scope>
    <scope>FUNCTION</scope>
</reference>
<reference key="22">
    <citation type="journal article" date="2004" name="Am. J. Hum. Genet.">
        <title>A missense single-nucleotide polymorphism in a gene encoding a protein tyrosine phosphatase (PTPN22) is associated with rheumatoid arthritis.</title>
        <authorList>
            <person name="Begovich A.B."/>
            <person name="Carlton V.E."/>
            <person name="Honigberg L.A."/>
            <person name="Schrodi S.J."/>
            <person name="Chokkalingam A.P."/>
            <person name="Alexander H.C."/>
            <person name="Ardlie K.G."/>
            <person name="Huang Q."/>
            <person name="Smith A.M."/>
            <person name="Spoerke J.M."/>
            <person name="Conn M.T."/>
            <person name="Chang M."/>
            <person name="Chang S.Y."/>
            <person name="Saiki R.K."/>
            <person name="Catanese J.J."/>
            <person name="Leong D.U."/>
            <person name="Garcia V.E."/>
            <person name="McAllister L.B."/>
            <person name="Jeffery D.A."/>
            <person name="Lee A.T."/>
            <person name="Batliwalla F."/>
            <person name="Remmers E."/>
            <person name="Criswell L.A."/>
            <person name="Seldin M.F."/>
            <person name="Kastner D.L."/>
            <person name="Amos C.I."/>
            <person name="Sninsky J.J."/>
            <person name="Gregersen P.K."/>
        </authorList>
    </citation>
    <scope>VARIANT TRP-620</scope>
    <scope>INVOLVEMENT IN RA</scope>
    <scope>INTERACTION WITH CSK</scope>
    <scope>TISSUE SPECIFICITY</scope>
</reference>
<reference key="23">
    <citation type="journal article" date="2004" name="Am. J. Hum. Genet.">
        <title>Genetic association of the R620W polymorphism of protein tyrosine phosphatase PTPN22 with human SLE.</title>
        <authorList>
            <person name="Kyogoku C."/>
            <person name="Langefeld C.D."/>
            <person name="Ortmann W.A."/>
            <person name="Lee A."/>
            <person name="Selby S."/>
            <person name="Carlton V.E.H."/>
            <person name="Chang M."/>
            <person name="Ramos P."/>
            <person name="Baechler E.C."/>
            <person name="Batliwalla F.M."/>
            <person name="Novitzke J."/>
            <person name="Williams A.H."/>
            <person name="Gillett C."/>
            <person name="Rodine P."/>
            <person name="Graham R.R."/>
            <person name="Ardlie K.G."/>
            <person name="Gaffney P.M."/>
            <person name="Moser K.L."/>
            <person name="Petri M."/>
            <person name="Begovich A.B."/>
            <person name="Gregersen P.K."/>
            <person name="Behrens T.W."/>
        </authorList>
    </citation>
    <scope>VARIANT TRP-620</scope>
    <scope>INVOLVEMENT IN SLE</scope>
</reference>
<reference key="24">
    <citation type="journal article" date="2004" name="Nat. Genet.">
        <title>A functional variant of lymphoid tyrosine phosphatase is associated with type I diabetes.</title>
        <authorList>
            <person name="Bottini N."/>
            <person name="Musumeci L."/>
            <person name="Alonso A."/>
            <person name="Rahmouni S."/>
            <person name="Nika K."/>
            <person name="Rostamkhani M."/>
            <person name="MacMurray J."/>
            <person name="Meloni G.F."/>
            <person name="Lucarelli P."/>
            <person name="Pellecchia M."/>
            <person name="Eisenbarth G.S."/>
            <person name="Comings D."/>
            <person name="Mustelin T."/>
        </authorList>
    </citation>
    <scope>VARIANT TRP-620</scope>
    <scope>INVOLVEMENT IN T1D</scope>
    <scope>CHARACTERIZATION OF VARIANT TRP-620</scope>
</reference>
<reference key="25">
    <citation type="journal article" date="2004" name="J. Clin. Endocrinol. Metab.">
        <title>The codon 620 tryptophan allele of the lymphoid tyrosine phosphatase (LYP) gene is a major determinant of Graves' disease.</title>
        <authorList>
            <person name="Velaga M.R."/>
            <person name="Wilson V."/>
            <person name="Jennings C.E."/>
            <person name="Owen C.J."/>
            <person name="Herington S."/>
            <person name="Donaldson P.T."/>
            <person name="Ball S.G."/>
            <person name="James R.A."/>
            <person name="Quinton R."/>
            <person name="Perros P."/>
            <person name="Pearce S.H."/>
        </authorList>
    </citation>
    <scope>VARIANT TRP-620</scope>
</reference>
<reference key="26">
    <citation type="journal article" date="2005" name="Am. J. Hum. Genet.">
        <title>Analysis of families in the multiple autoimmune disease genetics consortium (MADGC) collection: the PTPN22 620W allele associates with multiple autoimmune phenotypes.</title>
        <authorList>
            <person name="Criswell L.A."/>
            <person name="Pfeiffer K.A."/>
            <person name="Lum R.F."/>
            <person name="Gonzales B."/>
            <person name="Novitzke J."/>
            <person name="Kern M."/>
            <person name="Moser K.L."/>
            <person name="Begovich A.B."/>
            <person name="Carlton V.E."/>
            <person name="Li W."/>
            <person name="Lee A.T."/>
            <person name="Ortmann W."/>
            <person name="Behrens T.W."/>
            <person name="Gregersen P.K."/>
        </authorList>
    </citation>
    <scope>VARIANT TRP-620</scope>
</reference>
<reference key="27">
    <citation type="journal article" date="2005" name="Genes Immun.">
        <title>A single-nucleotide polymorphism in the gene encoding lymphoid protein tyrosine phosphatase (PTPN22) confers susceptibility to generalised vitiligo.</title>
        <authorList>
            <person name="Canton I."/>
            <person name="Akhtar S."/>
            <person name="Gavalas N.G."/>
            <person name="Gawkrodger D.J."/>
            <person name="Blomhoff A."/>
            <person name="Watson P.F."/>
            <person name="Weetman A.P."/>
            <person name="Kemp E.H."/>
        </authorList>
    </citation>
    <scope>VARIANT TRP-620</scope>
    <scope>INVOLVEMENT IN VTLG</scope>
</reference>
<reference key="28">
    <citation type="journal article" date="2009" name="J. Immunol.">
        <title>Cutting edge: the PTPN22 allelic variant associated with autoimmunity impairs B cell signaling.</title>
        <authorList>
            <person name="Arechiga A.F."/>
            <person name="Habib T."/>
            <person name="He Y."/>
            <person name="Zhang X."/>
            <person name="Zhang Z.Y."/>
            <person name="Funk A."/>
            <person name="Buckner J.H."/>
        </authorList>
    </citation>
    <scope>VARIANT TRP-620</scope>
    <scope>CHARACTERIZATION OF VARIANT TRP-620</scope>
</reference>
<reference key="29">
    <citation type="journal article" date="2011" name="Inflamm. Bowel Dis.">
        <title>Differential association of two PTPN22 coding variants with Crohn's disease and ulcerative colitis.</title>
        <authorList>
            <person name="Diaz-Gallo L.M."/>
            <person name="Espino-Paisan L."/>
            <person name="Fransen K."/>
            <person name="Gomez-Garcia M."/>
            <person name="van Sommeren S."/>
            <person name="Cardena C."/>
            <person name="Rodrigo L."/>
            <person name="Mendoza J.L."/>
            <person name="Taxonera C."/>
            <person name="Nieto A."/>
            <person name="Alcain G."/>
            <person name="Cueto I."/>
            <person name="Lopez-Nevot M.A."/>
            <person name="Bottini N."/>
            <person name="Barclay M.L."/>
            <person name="Crusius J.B."/>
            <person name="van Bodegraven A.A."/>
            <person name="Wijmenga C."/>
            <person name="Ponsioen C.Y."/>
            <person name="Gearry R.B."/>
            <person name="Roberts R.L."/>
            <person name="Weersma R.K."/>
            <person name="Urcelay E."/>
            <person name="Merriman T.R."/>
            <person name="Alizadeh B.Z."/>
            <person name="Martin J."/>
        </authorList>
    </citation>
    <scope>VARIANTS GLN-263 AND TRP-620</scope>
    <scope>CHARACTERIZATION OF VARIANTS GLN-263 AND TRP-620</scope>
</reference>
<reference key="30">
    <citation type="journal article" date="2012" name="PLoS ONE">
        <title>Biochemical and functional studies of lymphoid-specific tyrosine phosphatase (Lyp) variants S201F and R266W.</title>
        <authorList>
            <person name="Liu J."/>
            <person name="Chen M."/>
            <person name="Li R."/>
            <person name="Yang F."/>
            <person name="Shi X."/>
            <person name="Zhu L."/>
            <person name="Wang H.M."/>
            <person name="Yao W."/>
            <person name="Liu Q."/>
            <person name="Meng F.G."/>
            <person name="Sun J.P."/>
            <person name="Pang Q."/>
            <person name="Yu X."/>
        </authorList>
    </citation>
    <scope>VARIANTS PHE-201; GLN-263 AND TRP-266</scope>
    <scope>CHARACTERIZATION OF VARIANTS PHE-201; GLN-263 AND TRP-266</scope>
</reference>